<dbReference type="EC" id="3.1.-.-" evidence="1"/>
<dbReference type="EMBL" id="AE006468">
    <property type="protein sequence ID" value="AAL21972.1"/>
    <property type="molecule type" value="Genomic_DNA"/>
</dbReference>
<dbReference type="RefSeq" id="NP_462013.1">
    <property type="nucleotide sequence ID" value="NC_003197.2"/>
</dbReference>
<dbReference type="SMR" id="Q8ZM50"/>
<dbReference type="STRING" id="99287.STM3097"/>
<dbReference type="PaxDb" id="99287-STM3097"/>
<dbReference type="GeneID" id="1254620"/>
<dbReference type="KEGG" id="stm:STM3097"/>
<dbReference type="PATRIC" id="fig|99287.12.peg.3282"/>
<dbReference type="HOGENOM" id="CLU_098240_3_0_6"/>
<dbReference type="OMA" id="PMGWTAQ"/>
<dbReference type="PhylomeDB" id="Q8ZM50"/>
<dbReference type="BioCyc" id="SENT99287:STM3097-MONOMER"/>
<dbReference type="Proteomes" id="UP000001014">
    <property type="component" value="Chromosome"/>
</dbReference>
<dbReference type="GO" id="GO:0005737">
    <property type="term" value="C:cytoplasm"/>
    <property type="evidence" value="ECO:0007669"/>
    <property type="project" value="UniProtKB-SubCell"/>
</dbReference>
<dbReference type="GO" id="GO:0004518">
    <property type="term" value="F:nuclease activity"/>
    <property type="evidence" value="ECO:0007669"/>
    <property type="project" value="UniProtKB-KW"/>
</dbReference>
<dbReference type="GO" id="GO:0000967">
    <property type="term" value="P:rRNA 5'-end processing"/>
    <property type="evidence" value="ECO:0000318"/>
    <property type="project" value="GO_Central"/>
</dbReference>
<dbReference type="CDD" id="cd16964">
    <property type="entry name" value="YqgF"/>
    <property type="match status" value="1"/>
</dbReference>
<dbReference type="FunFam" id="3.30.420.140:FF:000002">
    <property type="entry name" value="Putative pre-16S rRNA nuclease"/>
    <property type="match status" value="1"/>
</dbReference>
<dbReference type="Gene3D" id="3.30.420.140">
    <property type="entry name" value="YqgF/RNase H-like domain"/>
    <property type="match status" value="1"/>
</dbReference>
<dbReference type="HAMAP" id="MF_00651">
    <property type="entry name" value="Nuclease_YqgF"/>
    <property type="match status" value="1"/>
</dbReference>
<dbReference type="InterPro" id="IPR012337">
    <property type="entry name" value="RNaseH-like_sf"/>
</dbReference>
<dbReference type="InterPro" id="IPR005227">
    <property type="entry name" value="YqgF"/>
</dbReference>
<dbReference type="InterPro" id="IPR006641">
    <property type="entry name" value="YqgF/RNaseH-like_dom"/>
</dbReference>
<dbReference type="InterPro" id="IPR037027">
    <property type="entry name" value="YqgF/RNaseH-like_dom_sf"/>
</dbReference>
<dbReference type="NCBIfam" id="TIGR00250">
    <property type="entry name" value="RNAse_H_YqgF"/>
    <property type="match status" value="1"/>
</dbReference>
<dbReference type="PANTHER" id="PTHR33317">
    <property type="entry name" value="POLYNUCLEOTIDYL TRANSFERASE, RIBONUCLEASE H-LIKE SUPERFAMILY PROTEIN"/>
    <property type="match status" value="1"/>
</dbReference>
<dbReference type="PANTHER" id="PTHR33317:SF4">
    <property type="entry name" value="POLYNUCLEOTIDYL TRANSFERASE, RIBONUCLEASE H-LIKE SUPERFAMILY PROTEIN"/>
    <property type="match status" value="1"/>
</dbReference>
<dbReference type="Pfam" id="PF03652">
    <property type="entry name" value="RuvX"/>
    <property type="match status" value="1"/>
</dbReference>
<dbReference type="SMART" id="SM00732">
    <property type="entry name" value="YqgFc"/>
    <property type="match status" value="1"/>
</dbReference>
<dbReference type="SUPFAM" id="SSF53098">
    <property type="entry name" value="Ribonuclease H-like"/>
    <property type="match status" value="1"/>
</dbReference>
<gene>
    <name evidence="1" type="primary">yqgF</name>
    <name type="ordered locus">STM3097</name>
</gene>
<organism>
    <name type="scientific">Salmonella typhimurium (strain LT2 / SGSC1412 / ATCC 700720)</name>
    <dbReference type="NCBI Taxonomy" id="99287"/>
    <lineage>
        <taxon>Bacteria</taxon>
        <taxon>Pseudomonadati</taxon>
        <taxon>Pseudomonadota</taxon>
        <taxon>Gammaproteobacteria</taxon>
        <taxon>Enterobacterales</taxon>
        <taxon>Enterobacteriaceae</taxon>
        <taxon>Salmonella</taxon>
    </lineage>
</organism>
<sequence>MSGTLLAFDFGTKSIGVAIGQRITGTARPLPAIKAQDGTPDWTLIERLLKEWQPDEIIVGLPLNMDGTEQPLTARARKFANRIHGRFGVTVTLHDERLSTVEARSGLFERGGYRALNKGKVDSASAVIILESYFEQGY</sequence>
<keyword id="KW-0963">Cytoplasm</keyword>
<keyword id="KW-0378">Hydrolase</keyword>
<keyword id="KW-0540">Nuclease</keyword>
<keyword id="KW-1185">Reference proteome</keyword>
<keyword id="KW-0690">Ribosome biogenesis</keyword>
<accession>Q8ZM50</accession>
<reference key="1">
    <citation type="journal article" date="2001" name="Nature">
        <title>Complete genome sequence of Salmonella enterica serovar Typhimurium LT2.</title>
        <authorList>
            <person name="McClelland M."/>
            <person name="Sanderson K.E."/>
            <person name="Spieth J."/>
            <person name="Clifton S.W."/>
            <person name="Latreille P."/>
            <person name="Courtney L."/>
            <person name="Porwollik S."/>
            <person name="Ali J."/>
            <person name="Dante M."/>
            <person name="Du F."/>
            <person name="Hou S."/>
            <person name="Layman D."/>
            <person name="Leonard S."/>
            <person name="Nguyen C."/>
            <person name="Scott K."/>
            <person name="Holmes A."/>
            <person name="Grewal N."/>
            <person name="Mulvaney E."/>
            <person name="Ryan E."/>
            <person name="Sun H."/>
            <person name="Florea L."/>
            <person name="Miller W."/>
            <person name="Stoneking T."/>
            <person name="Nhan M."/>
            <person name="Waterston R."/>
            <person name="Wilson R.K."/>
        </authorList>
    </citation>
    <scope>NUCLEOTIDE SEQUENCE [LARGE SCALE GENOMIC DNA]</scope>
    <source>
        <strain>LT2 / SGSC1412 / ATCC 700720</strain>
    </source>
</reference>
<protein>
    <recommendedName>
        <fullName evidence="1">Putative pre-16S rRNA nuclease</fullName>
        <ecNumber evidence="1">3.1.-.-</ecNumber>
    </recommendedName>
</protein>
<evidence type="ECO:0000255" key="1">
    <source>
        <dbReference type="HAMAP-Rule" id="MF_00651"/>
    </source>
</evidence>
<comment type="function">
    <text evidence="1">Could be a nuclease involved in processing of the 5'-end of pre-16S rRNA.</text>
</comment>
<comment type="subcellular location">
    <subcellularLocation>
        <location evidence="1">Cytoplasm</location>
    </subcellularLocation>
</comment>
<comment type="similarity">
    <text evidence="1">Belongs to the YqgF nuclease family.</text>
</comment>
<name>YQGF_SALTY</name>
<proteinExistence type="inferred from homology"/>
<feature type="chain" id="PRO_0000172133" description="Putative pre-16S rRNA nuclease">
    <location>
        <begin position="1"/>
        <end position="138"/>
    </location>
</feature>